<reference key="1">
    <citation type="journal article" date="2008" name="PLoS ONE">
        <title>Survival in nuclear waste, extreme resistance, and potential applications gleaned from the genome sequence of Kineococcus radiotolerans SRS30216.</title>
        <authorList>
            <person name="Bagwell C.E."/>
            <person name="Bhat S."/>
            <person name="Hawkins G.M."/>
            <person name="Smith B.W."/>
            <person name="Biswas T."/>
            <person name="Hoover T.R."/>
            <person name="Saunders E."/>
            <person name="Han C.S."/>
            <person name="Tsodikov O.V."/>
            <person name="Shimkets L.J."/>
        </authorList>
    </citation>
    <scope>NUCLEOTIDE SEQUENCE [LARGE SCALE GENOMIC DNA]</scope>
    <source>
        <strain>ATCC BAA-149 / DSM 14245 / SRS30216</strain>
    </source>
</reference>
<accession>A6W5M6</accession>
<comment type="catalytic activity">
    <reaction evidence="1">
        <text>(S)-4-amino-5-oxopentanoate = 5-aminolevulinate</text>
        <dbReference type="Rhea" id="RHEA:14265"/>
        <dbReference type="ChEBI" id="CHEBI:57501"/>
        <dbReference type="ChEBI" id="CHEBI:356416"/>
        <dbReference type="EC" id="5.4.3.8"/>
    </reaction>
</comment>
<comment type="cofactor">
    <cofactor evidence="1">
        <name>pyridoxal 5'-phosphate</name>
        <dbReference type="ChEBI" id="CHEBI:597326"/>
    </cofactor>
</comment>
<comment type="pathway">
    <text evidence="1">Porphyrin-containing compound metabolism; protoporphyrin-IX biosynthesis; 5-aminolevulinate from L-glutamyl-tRNA(Glu): step 2/2.</text>
</comment>
<comment type="subunit">
    <text evidence="1">Homodimer.</text>
</comment>
<comment type="subcellular location">
    <subcellularLocation>
        <location evidence="1">Cytoplasm</location>
    </subcellularLocation>
</comment>
<comment type="similarity">
    <text evidence="1">Belongs to the class-III pyridoxal-phosphate-dependent aminotransferase family. HemL subfamily.</text>
</comment>
<proteinExistence type="inferred from homology"/>
<protein>
    <recommendedName>
        <fullName evidence="1">Glutamate-1-semialdehyde 2,1-aminomutase</fullName>
        <shortName evidence="1">GSA</shortName>
        <ecNumber evidence="1">5.4.3.8</ecNumber>
    </recommendedName>
    <alternativeName>
        <fullName evidence="1">Glutamate-1-semialdehyde aminotransferase</fullName>
        <shortName evidence="1">GSA-AT</shortName>
    </alternativeName>
</protein>
<gene>
    <name evidence="1" type="primary">hemL</name>
    <name type="ordered locus">Krad_0626</name>
</gene>
<feature type="chain" id="PRO_0000382323" description="Glutamate-1-semialdehyde 2,1-aminomutase">
    <location>
        <begin position="1"/>
        <end position="448"/>
    </location>
</feature>
<feature type="modified residue" description="N6-(pyridoxal phosphate)lysine" evidence="1">
    <location>
        <position position="281"/>
    </location>
</feature>
<evidence type="ECO:0000255" key="1">
    <source>
        <dbReference type="HAMAP-Rule" id="MF_00375"/>
    </source>
</evidence>
<dbReference type="EC" id="5.4.3.8" evidence="1"/>
<dbReference type="EMBL" id="CP000750">
    <property type="protein sequence ID" value="ABS02115.1"/>
    <property type="molecule type" value="Genomic_DNA"/>
</dbReference>
<dbReference type="RefSeq" id="WP_012085043.1">
    <property type="nucleotide sequence ID" value="NC_009664.2"/>
</dbReference>
<dbReference type="SMR" id="A6W5M6"/>
<dbReference type="STRING" id="266940.Krad_0626"/>
<dbReference type="KEGG" id="kra:Krad_0626"/>
<dbReference type="eggNOG" id="COG0001">
    <property type="taxonomic scope" value="Bacteria"/>
</dbReference>
<dbReference type="HOGENOM" id="CLU_016922_1_5_11"/>
<dbReference type="OrthoDB" id="9801052at2"/>
<dbReference type="UniPathway" id="UPA00251">
    <property type="reaction ID" value="UER00317"/>
</dbReference>
<dbReference type="Proteomes" id="UP000001116">
    <property type="component" value="Chromosome"/>
</dbReference>
<dbReference type="GO" id="GO:0005737">
    <property type="term" value="C:cytoplasm"/>
    <property type="evidence" value="ECO:0007669"/>
    <property type="project" value="UniProtKB-SubCell"/>
</dbReference>
<dbReference type="GO" id="GO:0042286">
    <property type="term" value="F:glutamate-1-semialdehyde 2,1-aminomutase activity"/>
    <property type="evidence" value="ECO:0007669"/>
    <property type="project" value="UniProtKB-UniRule"/>
</dbReference>
<dbReference type="GO" id="GO:0030170">
    <property type="term" value="F:pyridoxal phosphate binding"/>
    <property type="evidence" value="ECO:0007669"/>
    <property type="project" value="InterPro"/>
</dbReference>
<dbReference type="GO" id="GO:0008483">
    <property type="term" value="F:transaminase activity"/>
    <property type="evidence" value="ECO:0007669"/>
    <property type="project" value="InterPro"/>
</dbReference>
<dbReference type="GO" id="GO:0006782">
    <property type="term" value="P:protoporphyrinogen IX biosynthetic process"/>
    <property type="evidence" value="ECO:0007669"/>
    <property type="project" value="UniProtKB-UniRule"/>
</dbReference>
<dbReference type="CDD" id="cd00610">
    <property type="entry name" value="OAT_like"/>
    <property type="match status" value="1"/>
</dbReference>
<dbReference type="FunFam" id="3.40.640.10:FF:000021">
    <property type="entry name" value="Glutamate-1-semialdehyde 2,1-aminomutase"/>
    <property type="match status" value="1"/>
</dbReference>
<dbReference type="Gene3D" id="3.90.1150.10">
    <property type="entry name" value="Aspartate Aminotransferase, domain 1"/>
    <property type="match status" value="1"/>
</dbReference>
<dbReference type="Gene3D" id="3.40.640.10">
    <property type="entry name" value="Type I PLP-dependent aspartate aminotransferase-like (Major domain)"/>
    <property type="match status" value="1"/>
</dbReference>
<dbReference type="HAMAP" id="MF_00375">
    <property type="entry name" value="HemL_aminotrans_3"/>
    <property type="match status" value="1"/>
</dbReference>
<dbReference type="InterPro" id="IPR004639">
    <property type="entry name" value="4pyrrol_synth_GluAld_NH2Trfase"/>
</dbReference>
<dbReference type="InterPro" id="IPR005814">
    <property type="entry name" value="Aminotrans_3"/>
</dbReference>
<dbReference type="InterPro" id="IPR049704">
    <property type="entry name" value="Aminotrans_3_PPA_site"/>
</dbReference>
<dbReference type="InterPro" id="IPR015424">
    <property type="entry name" value="PyrdxlP-dep_Trfase"/>
</dbReference>
<dbReference type="InterPro" id="IPR015421">
    <property type="entry name" value="PyrdxlP-dep_Trfase_major"/>
</dbReference>
<dbReference type="InterPro" id="IPR015422">
    <property type="entry name" value="PyrdxlP-dep_Trfase_small"/>
</dbReference>
<dbReference type="NCBIfam" id="TIGR00713">
    <property type="entry name" value="hemL"/>
    <property type="match status" value="1"/>
</dbReference>
<dbReference type="NCBIfam" id="NF000818">
    <property type="entry name" value="PRK00062.1"/>
    <property type="match status" value="1"/>
</dbReference>
<dbReference type="PANTHER" id="PTHR43713">
    <property type="entry name" value="GLUTAMATE-1-SEMIALDEHYDE 2,1-AMINOMUTASE"/>
    <property type="match status" value="1"/>
</dbReference>
<dbReference type="PANTHER" id="PTHR43713:SF3">
    <property type="entry name" value="GLUTAMATE-1-SEMIALDEHYDE 2,1-AMINOMUTASE 1, CHLOROPLASTIC-RELATED"/>
    <property type="match status" value="1"/>
</dbReference>
<dbReference type="Pfam" id="PF00202">
    <property type="entry name" value="Aminotran_3"/>
    <property type="match status" value="1"/>
</dbReference>
<dbReference type="SUPFAM" id="SSF53383">
    <property type="entry name" value="PLP-dependent transferases"/>
    <property type="match status" value="1"/>
</dbReference>
<dbReference type="PROSITE" id="PS00600">
    <property type="entry name" value="AA_TRANSFER_CLASS_3"/>
    <property type="match status" value="1"/>
</dbReference>
<keyword id="KW-0963">Cytoplasm</keyword>
<keyword id="KW-0413">Isomerase</keyword>
<keyword id="KW-0627">Porphyrin biosynthesis</keyword>
<keyword id="KW-0663">Pyridoxal phosphate</keyword>
<keyword id="KW-1185">Reference proteome</keyword>
<organism>
    <name type="scientific">Kineococcus radiotolerans (strain ATCC BAA-149 / DSM 14245 / SRS30216)</name>
    <dbReference type="NCBI Taxonomy" id="266940"/>
    <lineage>
        <taxon>Bacteria</taxon>
        <taxon>Bacillati</taxon>
        <taxon>Actinomycetota</taxon>
        <taxon>Actinomycetes</taxon>
        <taxon>Kineosporiales</taxon>
        <taxon>Kineosporiaceae</taxon>
        <taxon>Kineococcus</taxon>
    </lineage>
</organism>
<name>GSA_KINRD</name>
<sequence length="448" mass="45929">MTAPTPAPTTSSAPTSAALFERAAAVIPGGVNSPVRAFRAVGGTPRFTASARGPYLTDADGREYVDLLCSWGPMILGHAHPDVLAAVTAAAQDGFSYGTPTEREVLLAEEIVARVEPVEQLRMVSSGTEATMSAIRLARGFTGRPVIVKFAGHYHGHVDALLASAGSGLATFALPDTPGVTGTAAGDTIVIPYNDPEALAEVFRLHGDRIACVITEAAAGNMGVVAPQPGFTAELRRVTREHGALLVSDEVMTGFRVSAAGWYGHEGLGLEHAPDLLTFGKVMGGGFPAAAFGGRADVMAHLAPAGPVYQAGTLSGNPIATAAGLATLRACTPEVYAAVETAATAVREAASAALSAAGVPHLVNTAGSMFSVFFTGLDAVTDYEQARQQDLGAFRAFFHSMLDQGVHLPPSAFEAWFLSASHDEAAIGRVVEALPAAARAAAEGSGSL</sequence>